<dbReference type="EMBL" id="CP000478">
    <property type="protein sequence ID" value="ABK19309.1"/>
    <property type="molecule type" value="Genomic_DNA"/>
</dbReference>
<dbReference type="RefSeq" id="WP_011700434.1">
    <property type="nucleotide sequence ID" value="NC_008554.1"/>
</dbReference>
<dbReference type="SMR" id="A0LPF7"/>
<dbReference type="FunCoup" id="A0LPF7">
    <property type="interactions" value="624"/>
</dbReference>
<dbReference type="STRING" id="335543.Sfum_3639"/>
<dbReference type="KEGG" id="sfu:Sfum_3639"/>
<dbReference type="eggNOG" id="COG0261">
    <property type="taxonomic scope" value="Bacteria"/>
</dbReference>
<dbReference type="HOGENOM" id="CLU_061463_3_2_7"/>
<dbReference type="InParanoid" id="A0LPF7"/>
<dbReference type="OrthoDB" id="9813334at2"/>
<dbReference type="Proteomes" id="UP000001784">
    <property type="component" value="Chromosome"/>
</dbReference>
<dbReference type="GO" id="GO:0005737">
    <property type="term" value="C:cytoplasm"/>
    <property type="evidence" value="ECO:0007669"/>
    <property type="project" value="UniProtKB-ARBA"/>
</dbReference>
<dbReference type="GO" id="GO:1990904">
    <property type="term" value="C:ribonucleoprotein complex"/>
    <property type="evidence" value="ECO:0007669"/>
    <property type="project" value="UniProtKB-KW"/>
</dbReference>
<dbReference type="GO" id="GO:0005840">
    <property type="term" value="C:ribosome"/>
    <property type="evidence" value="ECO:0007669"/>
    <property type="project" value="UniProtKB-KW"/>
</dbReference>
<dbReference type="GO" id="GO:0019843">
    <property type="term" value="F:rRNA binding"/>
    <property type="evidence" value="ECO:0007669"/>
    <property type="project" value="UniProtKB-UniRule"/>
</dbReference>
<dbReference type="GO" id="GO:0003735">
    <property type="term" value="F:structural constituent of ribosome"/>
    <property type="evidence" value="ECO:0007669"/>
    <property type="project" value="InterPro"/>
</dbReference>
<dbReference type="GO" id="GO:0006412">
    <property type="term" value="P:translation"/>
    <property type="evidence" value="ECO:0007669"/>
    <property type="project" value="UniProtKB-UniRule"/>
</dbReference>
<dbReference type="HAMAP" id="MF_01363">
    <property type="entry name" value="Ribosomal_bL21"/>
    <property type="match status" value="1"/>
</dbReference>
<dbReference type="InterPro" id="IPR028909">
    <property type="entry name" value="bL21-like"/>
</dbReference>
<dbReference type="InterPro" id="IPR036164">
    <property type="entry name" value="bL21-like_sf"/>
</dbReference>
<dbReference type="InterPro" id="IPR001787">
    <property type="entry name" value="Ribosomal_bL21"/>
</dbReference>
<dbReference type="InterPro" id="IPR018258">
    <property type="entry name" value="Ribosomal_bL21_CS"/>
</dbReference>
<dbReference type="NCBIfam" id="TIGR00061">
    <property type="entry name" value="L21"/>
    <property type="match status" value="1"/>
</dbReference>
<dbReference type="PANTHER" id="PTHR21349">
    <property type="entry name" value="50S RIBOSOMAL PROTEIN L21"/>
    <property type="match status" value="1"/>
</dbReference>
<dbReference type="PANTHER" id="PTHR21349:SF0">
    <property type="entry name" value="LARGE RIBOSOMAL SUBUNIT PROTEIN BL21M"/>
    <property type="match status" value="1"/>
</dbReference>
<dbReference type="Pfam" id="PF00829">
    <property type="entry name" value="Ribosomal_L21p"/>
    <property type="match status" value="1"/>
</dbReference>
<dbReference type="SUPFAM" id="SSF141091">
    <property type="entry name" value="L21p-like"/>
    <property type="match status" value="1"/>
</dbReference>
<dbReference type="PROSITE" id="PS01169">
    <property type="entry name" value="RIBOSOMAL_L21"/>
    <property type="match status" value="1"/>
</dbReference>
<sequence length="106" mass="12061">MYAVLKSGGRQYEVRPGQVVKVEKLLGEVGDKVTLDQVLLFSDGTDIQVGQPVLANIAVQGQIVEQGRHRKIVIFKHKRRKDYRKKQGHRQHYTAVRVEEIVTLGQ</sequence>
<reference key="1">
    <citation type="submission" date="2006-10" db="EMBL/GenBank/DDBJ databases">
        <title>Complete sequence of Syntrophobacter fumaroxidans MPOB.</title>
        <authorList>
            <consortium name="US DOE Joint Genome Institute"/>
            <person name="Copeland A."/>
            <person name="Lucas S."/>
            <person name="Lapidus A."/>
            <person name="Barry K."/>
            <person name="Detter J.C."/>
            <person name="Glavina del Rio T."/>
            <person name="Hammon N."/>
            <person name="Israni S."/>
            <person name="Pitluck S."/>
            <person name="Goltsman E.G."/>
            <person name="Martinez M."/>
            <person name="Schmutz J."/>
            <person name="Larimer F."/>
            <person name="Land M."/>
            <person name="Hauser L."/>
            <person name="Kyrpides N."/>
            <person name="Kim E."/>
            <person name="Boone D.R."/>
            <person name="Brockman F."/>
            <person name="Culley D."/>
            <person name="Ferry J."/>
            <person name="Gunsalus R."/>
            <person name="McInerney M.J."/>
            <person name="Morrison M."/>
            <person name="Plugge C."/>
            <person name="Rohlin L."/>
            <person name="Scholten J."/>
            <person name="Sieber J."/>
            <person name="Stams A.J.M."/>
            <person name="Worm P."/>
            <person name="Henstra A.M."/>
            <person name="Richardson P."/>
        </authorList>
    </citation>
    <scope>NUCLEOTIDE SEQUENCE [LARGE SCALE GENOMIC DNA]</scope>
    <source>
        <strain>DSM 10017 / MPOB</strain>
    </source>
</reference>
<keyword id="KW-1185">Reference proteome</keyword>
<keyword id="KW-0687">Ribonucleoprotein</keyword>
<keyword id="KW-0689">Ribosomal protein</keyword>
<keyword id="KW-0694">RNA-binding</keyword>
<keyword id="KW-0699">rRNA-binding</keyword>
<organism>
    <name type="scientific">Syntrophobacter fumaroxidans (strain DSM 10017 / MPOB)</name>
    <dbReference type="NCBI Taxonomy" id="335543"/>
    <lineage>
        <taxon>Bacteria</taxon>
        <taxon>Pseudomonadati</taxon>
        <taxon>Thermodesulfobacteriota</taxon>
        <taxon>Syntrophobacteria</taxon>
        <taxon>Syntrophobacterales</taxon>
        <taxon>Syntrophobacteraceae</taxon>
        <taxon>Syntrophobacter</taxon>
    </lineage>
</organism>
<protein>
    <recommendedName>
        <fullName evidence="1">Large ribosomal subunit protein bL21</fullName>
    </recommendedName>
    <alternativeName>
        <fullName evidence="2">50S ribosomal protein L21</fullName>
    </alternativeName>
</protein>
<proteinExistence type="inferred from homology"/>
<gene>
    <name evidence="1" type="primary">rplU</name>
    <name type="ordered locus">Sfum_3639</name>
</gene>
<comment type="function">
    <text evidence="1">This protein binds to 23S rRNA in the presence of protein L20.</text>
</comment>
<comment type="subunit">
    <text evidence="1">Part of the 50S ribosomal subunit. Contacts protein L20.</text>
</comment>
<comment type="similarity">
    <text evidence="1">Belongs to the bacterial ribosomal protein bL21 family.</text>
</comment>
<feature type="chain" id="PRO_1000073391" description="Large ribosomal subunit protein bL21">
    <location>
        <begin position="1"/>
        <end position="106"/>
    </location>
</feature>
<name>RL21_SYNFM</name>
<accession>A0LPF7</accession>
<evidence type="ECO:0000255" key="1">
    <source>
        <dbReference type="HAMAP-Rule" id="MF_01363"/>
    </source>
</evidence>
<evidence type="ECO:0000305" key="2"/>